<protein>
    <recommendedName>
        <fullName evidence="2">Parathyroid hormone</fullName>
        <shortName evidence="2">PTH</shortName>
    </recommendedName>
</protein>
<gene>
    <name evidence="2" type="primary">PTH</name>
</gene>
<evidence type="ECO:0000250" key="1">
    <source>
        <dbReference type="UniProtKB" id="P01270"/>
    </source>
</evidence>
<evidence type="ECO:0000303" key="2">
    <source>
    </source>
</evidence>
<evidence type="ECO:0000305" key="3"/>
<proteinExistence type="inferred from homology"/>
<name>PTHY_CHICK</name>
<dbReference type="EMBL" id="M31604">
    <property type="protein sequence ID" value="AAA49093.1"/>
    <property type="molecule type" value="mRNA"/>
</dbReference>
<dbReference type="EMBL" id="M36522">
    <property type="protein sequence ID" value="AAB02866.1"/>
    <property type="molecule type" value="mRNA"/>
</dbReference>
<dbReference type="PIR" id="A34937">
    <property type="entry name" value="A34937"/>
</dbReference>
<dbReference type="RefSeq" id="NP_990783.1">
    <property type="nucleotide sequence ID" value="NM_205452.3"/>
</dbReference>
<dbReference type="SMR" id="P15743"/>
<dbReference type="STRING" id="9031.ENSGALP00000044567"/>
<dbReference type="PaxDb" id="9031-ENSGALP00000008579"/>
<dbReference type="Ensembl" id="ENSGALT00010052598.1">
    <property type="protein sequence ID" value="ENSGALP00010031504.1"/>
    <property type="gene ID" value="ENSGALG00010021653.1"/>
</dbReference>
<dbReference type="GeneID" id="396436"/>
<dbReference type="KEGG" id="gga:396436"/>
<dbReference type="CTD" id="5741"/>
<dbReference type="VEuPathDB" id="HostDB:geneid_396436"/>
<dbReference type="eggNOG" id="ENOG502SB2W">
    <property type="taxonomic scope" value="Eukaryota"/>
</dbReference>
<dbReference type="GeneTree" id="ENSGT00390000018603"/>
<dbReference type="HOGENOM" id="CLU_164143_0_0_1"/>
<dbReference type="InParanoid" id="P15743"/>
<dbReference type="OMA" id="MKLQDVH"/>
<dbReference type="OrthoDB" id="9890537at2759"/>
<dbReference type="PhylomeDB" id="P15743"/>
<dbReference type="TreeFam" id="TF336197"/>
<dbReference type="Reactome" id="R-GGA-373080">
    <property type="pathway name" value="Class B/2 (Secretin family receptors)"/>
</dbReference>
<dbReference type="Reactome" id="R-GGA-418555">
    <property type="pathway name" value="G alpha (s) signalling events"/>
</dbReference>
<dbReference type="PRO" id="PR:P15743"/>
<dbReference type="Proteomes" id="UP000000539">
    <property type="component" value="Chromosome 5"/>
</dbReference>
<dbReference type="GO" id="GO:0005615">
    <property type="term" value="C:extracellular space"/>
    <property type="evidence" value="ECO:0000318"/>
    <property type="project" value="GO_Central"/>
</dbReference>
<dbReference type="GO" id="GO:0005179">
    <property type="term" value="F:hormone activity"/>
    <property type="evidence" value="ECO:0000318"/>
    <property type="project" value="GO_Central"/>
</dbReference>
<dbReference type="GO" id="GO:0031856">
    <property type="term" value="F:parathyroid hormone receptor binding"/>
    <property type="evidence" value="ECO:0000318"/>
    <property type="project" value="GO_Central"/>
</dbReference>
<dbReference type="GO" id="GO:0051428">
    <property type="term" value="F:peptide hormone receptor binding"/>
    <property type="evidence" value="ECO:0007669"/>
    <property type="project" value="Ensembl"/>
</dbReference>
<dbReference type="GO" id="GO:0031857">
    <property type="term" value="F:type 1 parathyroid hormone receptor binding"/>
    <property type="evidence" value="ECO:0007669"/>
    <property type="project" value="Ensembl"/>
</dbReference>
<dbReference type="GO" id="GO:0007189">
    <property type="term" value="P:adenylate cyclase-activating G protein-coupled receptor signaling pathway"/>
    <property type="evidence" value="ECO:0007669"/>
    <property type="project" value="Ensembl"/>
</dbReference>
<dbReference type="GO" id="GO:0030282">
    <property type="term" value="P:bone mineralization"/>
    <property type="evidence" value="ECO:0007669"/>
    <property type="project" value="Ensembl"/>
</dbReference>
<dbReference type="GO" id="GO:0007267">
    <property type="term" value="P:cell-cell signaling"/>
    <property type="evidence" value="ECO:0000318"/>
    <property type="project" value="GO_Central"/>
</dbReference>
<dbReference type="GO" id="GO:0048873">
    <property type="term" value="P:homeostasis of number of cells within a tissue"/>
    <property type="evidence" value="ECO:0007669"/>
    <property type="project" value="Ensembl"/>
</dbReference>
<dbReference type="GO" id="GO:0006874">
    <property type="term" value="P:intracellular calcium ion homeostasis"/>
    <property type="evidence" value="ECO:0007669"/>
    <property type="project" value="Ensembl"/>
</dbReference>
<dbReference type="GO" id="GO:0010960">
    <property type="term" value="P:magnesium ion homeostasis"/>
    <property type="evidence" value="ECO:0007669"/>
    <property type="project" value="Ensembl"/>
</dbReference>
<dbReference type="GO" id="GO:0071866">
    <property type="term" value="P:negative regulation of apoptotic process in bone marrow cell"/>
    <property type="evidence" value="ECO:0007669"/>
    <property type="project" value="Ensembl"/>
</dbReference>
<dbReference type="GO" id="GO:0010629">
    <property type="term" value="P:negative regulation of gene expression"/>
    <property type="evidence" value="ECO:0007669"/>
    <property type="project" value="Ensembl"/>
</dbReference>
<dbReference type="GO" id="GO:0055062">
    <property type="term" value="P:phosphate ion homeostasis"/>
    <property type="evidence" value="ECO:0007669"/>
    <property type="project" value="Ensembl"/>
</dbReference>
<dbReference type="GO" id="GO:0030501">
    <property type="term" value="P:positive regulation of bone mineralization"/>
    <property type="evidence" value="ECO:0007669"/>
    <property type="project" value="Ensembl"/>
</dbReference>
<dbReference type="GO" id="GO:0071864">
    <property type="term" value="P:positive regulation of cell proliferation in bone marrow"/>
    <property type="evidence" value="ECO:0007669"/>
    <property type="project" value="Ensembl"/>
</dbReference>
<dbReference type="GO" id="GO:0046326">
    <property type="term" value="P:positive regulation of D-glucose import"/>
    <property type="evidence" value="ECO:0007669"/>
    <property type="project" value="Ensembl"/>
</dbReference>
<dbReference type="GO" id="GO:0045725">
    <property type="term" value="P:positive regulation of glycogen biosynthetic process"/>
    <property type="evidence" value="ECO:0007669"/>
    <property type="project" value="Ensembl"/>
</dbReference>
<dbReference type="GO" id="GO:0060732">
    <property type="term" value="P:positive regulation of inositol phosphate biosynthetic process"/>
    <property type="evidence" value="ECO:0007669"/>
    <property type="project" value="Ensembl"/>
</dbReference>
<dbReference type="GO" id="GO:0090290">
    <property type="term" value="P:positive regulation of osteoclast proliferation"/>
    <property type="evidence" value="ECO:0007669"/>
    <property type="project" value="Ensembl"/>
</dbReference>
<dbReference type="GO" id="GO:0009967">
    <property type="term" value="P:positive regulation of signal transduction"/>
    <property type="evidence" value="ECO:0007669"/>
    <property type="project" value="Ensembl"/>
</dbReference>
<dbReference type="GO" id="GO:0045944">
    <property type="term" value="P:positive regulation of transcription by RNA polymerase II"/>
    <property type="evidence" value="ECO:0007669"/>
    <property type="project" value="Ensembl"/>
</dbReference>
<dbReference type="GO" id="GO:0006366">
    <property type="term" value="P:transcription by RNA polymerase II"/>
    <property type="evidence" value="ECO:0007669"/>
    <property type="project" value="Ensembl"/>
</dbReference>
<dbReference type="InterPro" id="IPR003625">
    <property type="entry name" value="PTH"/>
</dbReference>
<dbReference type="InterPro" id="IPR001415">
    <property type="entry name" value="PTH/PTH-rel"/>
</dbReference>
<dbReference type="PANTHER" id="PTHR10541">
    <property type="entry name" value="PARATHYROID HORMONE"/>
    <property type="match status" value="1"/>
</dbReference>
<dbReference type="PANTHER" id="PTHR10541:SF2">
    <property type="entry name" value="PARATHYROID HORMONE"/>
    <property type="match status" value="1"/>
</dbReference>
<dbReference type="Pfam" id="PF01279">
    <property type="entry name" value="Parathyroid"/>
    <property type="match status" value="1"/>
</dbReference>
<dbReference type="PIRSF" id="PIRSF001832">
    <property type="entry name" value="PTH"/>
    <property type="match status" value="1"/>
</dbReference>
<dbReference type="SMART" id="SM00087">
    <property type="entry name" value="PTH"/>
    <property type="match status" value="1"/>
</dbReference>
<dbReference type="PROSITE" id="PS00335">
    <property type="entry name" value="PARATHYROID"/>
    <property type="match status" value="1"/>
</dbReference>
<accession>P15743</accession>
<organism>
    <name type="scientific">Gallus gallus</name>
    <name type="common">Chicken</name>
    <dbReference type="NCBI Taxonomy" id="9031"/>
    <lineage>
        <taxon>Eukaryota</taxon>
        <taxon>Metazoa</taxon>
        <taxon>Chordata</taxon>
        <taxon>Craniata</taxon>
        <taxon>Vertebrata</taxon>
        <taxon>Euteleostomi</taxon>
        <taxon>Archelosauria</taxon>
        <taxon>Archosauria</taxon>
        <taxon>Dinosauria</taxon>
        <taxon>Saurischia</taxon>
        <taxon>Theropoda</taxon>
        <taxon>Coelurosauria</taxon>
        <taxon>Aves</taxon>
        <taxon>Neognathae</taxon>
        <taxon>Galloanserae</taxon>
        <taxon>Galliformes</taxon>
        <taxon>Phasianidae</taxon>
        <taxon>Phasianinae</taxon>
        <taxon>Gallus</taxon>
    </lineage>
</organism>
<comment type="function">
    <text evidence="1">Parathyroid hormone elevates calcium level by dissolving the salts in bone and preventing their renal excretion. Acts by binding to its receptor, PTH1R, activating G protein-coupled receptor signaling. Stimulates [1-14C]-2-deoxy-D-glucose (2DG) transport and glycogen synthesis in osteoblastic cells.</text>
</comment>
<comment type="subunit">
    <text evidence="1">Interacts with PTH1R (via N-terminal extracellular domain).</text>
</comment>
<comment type="subcellular location">
    <subcellularLocation>
        <location evidence="1">Secreted</location>
    </subcellularLocation>
</comment>
<comment type="similarity">
    <text evidence="3">Belongs to the parathyroid hormone family.</text>
</comment>
<reference key="1">
    <citation type="journal article" date="1989" name="Mol. Endocrinol.">
        <title>Nucleotide sequence of the DNA complementary to avian (chicken) preproparathyroid hormone mRNA and the deduced sequence of the hormone precursor.</title>
        <authorList>
            <person name="Russell J."/>
            <person name="Sherwood L.M."/>
        </authorList>
    </citation>
    <scope>NUCLEOTIDE SEQUENCE [MRNA]</scope>
</reference>
<reference key="2">
    <citation type="journal article" date="1988" name="J. Bone Miner. Res.">
        <title>Nucleotide sequence of cloned cDNAs encoding chicken preproparathyroid hormone.</title>
        <authorList>
            <person name="Khosla S."/>
            <person name="Demay M."/>
            <person name="Pines M."/>
            <person name="Hurwitz S."/>
            <person name="Potts J.T. Jr."/>
            <person name="Kronenberg H.M."/>
        </authorList>
    </citation>
    <scope>NUCLEOTIDE SEQUENCE [MRNA]</scope>
</reference>
<sequence length="119" mass="13943">MTSTKNLAKAIVILYAICFFTNSDGRPMMKRSVSEMQLMHNLGEHRHTVERQDWLQMKLQDVHSALEDARTQRPRNKEDIVLGEIRNRRLLPEHLRAAVQKKSIDLDKAYMNVLFKTKP</sequence>
<feature type="signal peptide">
    <location>
        <begin position="1"/>
        <end position="25"/>
    </location>
</feature>
<feature type="propeptide" id="PRO_0000023257">
    <location>
        <begin position="26"/>
        <end position="31"/>
    </location>
</feature>
<feature type="chain" id="PRO_0000023258" description="Parathyroid hormone">
    <location>
        <begin position="32"/>
        <end position="119"/>
    </location>
</feature>
<keyword id="KW-0165">Cleavage on pair of basic residues</keyword>
<keyword id="KW-0372">Hormone</keyword>
<keyword id="KW-1185">Reference proteome</keyword>
<keyword id="KW-0964">Secreted</keyword>
<keyword id="KW-0732">Signal</keyword>